<dbReference type="EMBL" id="CP001322">
    <property type="protein sequence ID" value="ACL04648.1"/>
    <property type="molecule type" value="Genomic_DNA"/>
</dbReference>
<dbReference type="RefSeq" id="WP_015947717.1">
    <property type="nucleotide sequence ID" value="NC_011768.1"/>
</dbReference>
<dbReference type="SMR" id="B8FL13"/>
<dbReference type="KEGG" id="dal:Dalk_2958"/>
<dbReference type="eggNOG" id="COG0217">
    <property type="taxonomic scope" value="Bacteria"/>
</dbReference>
<dbReference type="HOGENOM" id="CLU_062974_2_2_7"/>
<dbReference type="Proteomes" id="UP000000739">
    <property type="component" value="Chromosome"/>
</dbReference>
<dbReference type="GO" id="GO:0005829">
    <property type="term" value="C:cytosol"/>
    <property type="evidence" value="ECO:0007669"/>
    <property type="project" value="TreeGrafter"/>
</dbReference>
<dbReference type="GO" id="GO:0003677">
    <property type="term" value="F:DNA binding"/>
    <property type="evidence" value="ECO:0007669"/>
    <property type="project" value="UniProtKB-UniRule"/>
</dbReference>
<dbReference type="GO" id="GO:0006355">
    <property type="term" value="P:regulation of DNA-templated transcription"/>
    <property type="evidence" value="ECO:0007669"/>
    <property type="project" value="UniProtKB-UniRule"/>
</dbReference>
<dbReference type="FunFam" id="1.10.10.200:FF:000002">
    <property type="entry name" value="Probable transcriptional regulatory protein CLM62_37755"/>
    <property type="match status" value="1"/>
</dbReference>
<dbReference type="FunFam" id="3.30.70.980:FF:000002">
    <property type="entry name" value="Probable transcriptional regulatory protein YebC"/>
    <property type="match status" value="1"/>
</dbReference>
<dbReference type="Gene3D" id="1.10.10.200">
    <property type="match status" value="1"/>
</dbReference>
<dbReference type="Gene3D" id="3.30.70.980">
    <property type="match status" value="2"/>
</dbReference>
<dbReference type="HAMAP" id="MF_00693">
    <property type="entry name" value="Transcrip_reg_TACO1"/>
    <property type="match status" value="1"/>
</dbReference>
<dbReference type="InterPro" id="IPR017856">
    <property type="entry name" value="Integrase-like_N"/>
</dbReference>
<dbReference type="InterPro" id="IPR048300">
    <property type="entry name" value="TACO1_YebC-like_2nd/3rd_dom"/>
</dbReference>
<dbReference type="InterPro" id="IPR049083">
    <property type="entry name" value="TACO1_YebC_N"/>
</dbReference>
<dbReference type="InterPro" id="IPR002876">
    <property type="entry name" value="Transcrip_reg_TACO1-like"/>
</dbReference>
<dbReference type="InterPro" id="IPR026564">
    <property type="entry name" value="Transcrip_reg_TACO1-like_dom3"/>
</dbReference>
<dbReference type="InterPro" id="IPR029072">
    <property type="entry name" value="YebC-like"/>
</dbReference>
<dbReference type="NCBIfam" id="NF001030">
    <property type="entry name" value="PRK00110.1"/>
    <property type="match status" value="1"/>
</dbReference>
<dbReference type="NCBIfam" id="NF009044">
    <property type="entry name" value="PRK12378.1"/>
    <property type="match status" value="1"/>
</dbReference>
<dbReference type="NCBIfam" id="TIGR01033">
    <property type="entry name" value="YebC/PmpR family DNA-binding transcriptional regulator"/>
    <property type="match status" value="1"/>
</dbReference>
<dbReference type="PANTHER" id="PTHR12532:SF6">
    <property type="entry name" value="TRANSCRIPTIONAL REGULATORY PROTEIN YEBC-RELATED"/>
    <property type="match status" value="1"/>
</dbReference>
<dbReference type="PANTHER" id="PTHR12532">
    <property type="entry name" value="TRANSLATIONAL ACTIVATOR OF CYTOCHROME C OXIDASE 1"/>
    <property type="match status" value="1"/>
</dbReference>
<dbReference type="Pfam" id="PF20772">
    <property type="entry name" value="TACO1_YebC_N"/>
    <property type="match status" value="1"/>
</dbReference>
<dbReference type="Pfam" id="PF01709">
    <property type="entry name" value="Transcrip_reg"/>
    <property type="match status" value="1"/>
</dbReference>
<dbReference type="SUPFAM" id="SSF75625">
    <property type="entry name" value="YebC-like"/>
    <property type="match status" value="1"/>
</dbReference>
<evidence type="ECO:0000255" key="1">
    <source>
        <dbReference type="HAMAP-Rule" id="MF_00693"/>
    </source>
</evidence>
<sequence length="247" mass="26688">MSGHNKWSTIKHKKGAADAKRGKVFSKLIKEITIAARMGGGDPDANPRLRTAINAAKAENMPKDNWERAIKKGTGELEGVNYEEFQYEGYGPGGGAVLVESLTDNKNRAAAEIRHIFSKCGGSLGEAGCVAWMFDKKGYIVVNQSVTDEDTLMEIALEAGAEDVREAGDVFEVITQPDDYDAVKEAIDAAGIETEDASVTKLPQNTVEVTGKEAEQMVRLLQTLDDCDDVQNVYTSADIPDDAIGED</sequence>
<reference key="1">
    <citation type="journal article" date="2012" name="Environ. Microbiol.">
        <title>The genome sequence of Desulfatibacillum alkenivorans AK-01: a blueprint for anaerobic alkane oxidation.</title>
        <authorList>
            <person name="Callaghan A.V."/>
            <person name="Morris B.E."/>
            <person name="Pereira I.A."/>
            <person name="McInerney M.J."/>
            <person name="Austin R.N."/>
            <person name="Groves J.T."/>
            <person name="Kukor J.J."/>
            <person name="Suflita J.M."/>
            <person name="Young L.Y."/>
            <person name="Zylstra G.J."/>
            <person name="Wawrik B."/>
        </authorList>
    </citation>
    <scope>NUCLEOTIDE SEQUENCE [LARGE SCALE GENOMIC DNA]</scope>
    <source>
        <strain>AK-01</strain>
    </source>
</reference>
<accession>B8FL13</accession>
<gene>
    <name type="ordered locus">Dalk_2958</name>
</gene>
<protein>
    <recommendedName>
        <fullName evidence="1">Probable transcriptional regulatory protein Dalk_2958</fullName>
    </recommendedName>
</protein>
<proteinExistence type="inferred from homology"/>
<feature type="chain" id="PRO_1000132185" description="Probable transcriptional regulatory protein Dalk_2958">
    <location>
        <begin position="1"/>
        <end position="247"/>
    </location>
</feature>
<name>Y2958_DESAL</name>
<keyword id="KW-0963">Cytoplasm</keyword>
<keyword id="KW-0238">DNA-binding</keyword>
<keyword id="KW-1185">Reference proteome</keyword>
<keyword id="KW-0804">Transcription</keyword>
<keyword id="KW-0805">Transcription regulation</keyword>
<comment type="subcellular location">
    <subcellularLocation>
        <location evidence="1">Cytoplasm</location>
    </subcellularLocation>
</comment>
<comment type="similarity">
    <text evidence="1">Belongs to the TACO1 family.</text>
</comment>
<organism>
    <name type="scientific">Desulfatibacillum aliphaticivorans</name>
    <dbReference type="NCBI Taxonomy" id="218208"/>
    <lineage>
        <taxon>Bacteria</taxon>
        <taxon>Pseudomonadati</taxon>
        <taxon>Thermodesulfobacteriota</taxon>
        <taxon>Desulfobacteria</taxon>
        <taxon>Desulfobacterales</taxon>
        <taxon>Desulfatibacillaceae</taxon>
        <taxon>Desulfatibacillum</taxon>
    </lineage>
</organism>